<evidence type="ECO:0000255" key="1">
    <source>
        <dbReference type="HAMAP-Rule" id="MF_01271"/>
    </source>
</evidence>
<keyword id="KW-0067">ATP-binding</keyword>
<keyword id="KW-0119">Carbohydrate metabolism</keyword>
<keyword id="KW-0418">Kinase</keyword>
<keyword id="KW-0479">Metal-binding</keyword>
<keyword id="KW-0547">Nucleotide-binding</keyword>
<keyword id="KW-0808">Transferase</keyword>
<keyword id="KW-0862">Zinc</keyword>
<accession>B4T3Q8</accession>
<organism>
    <name type="scientific">Salmonella newport (strain SL254)</name>
    <dbReference type="NCBI Taxonomy" id="423368"/>
    <lineage>
        <taxon>Bacteria</taxon>
        <taxon>Pseudomonadati</taxon>
        <taxon>Pseudomonadota</taxon>
        <taxon>Gammaproteobacteria</taxon>
        <taxon>Enterobacterales</taxon>
        <taxon>Enterobacteriaceae</taxon>
        <taxon>Salmonella</taxon>
    </lineage>
</organism>
<name>NAGK_SALNS</name>
<sequence length="303" mass="33060">MYYGFDIGGTKIALGVFDSTRRLQWEKRVPTPHTSYSAFLDAVCELVEEADQRFGVKGSVGIGIPGMPETEDGTLYAANVPAASGKPLRADLSARLDRDVRLDNDANCFALSEAWDDEFTQYPLVMGLILGTGVGGGLVLNGKPITGQSYITGEFGHMRLPVDALTLMGFDFPLRRCGCGQMGCIENYLSGRGFAWLYQHYYDQSLQAPEIIALWEQGDEQAHAHVERYLDLLAVCLGNILTIVDPDLLVIGGGLSNFTAITTQLAERLPRHLLPVARAPRIERARHGDAGGMRGAAFLHLTD</sequence>
<gene>
    <name evidence="1" type="primary">nagK</name>
    <name type="ordered locus">SNSL254_A1320</name>
</gene>
<protein>
    <recommendedName>
        <fullName evidence="1">N-acetyl-D-glucosamine kinase</fullName>
        <ecNumber evidence="1">2.7.1.59</ecNumber>
    </recommendedName>
    <alternativeName>
        <fullName evidence="1">GlcNAc kinase</fullName>
    </alternativeName>
</protein>
<reference key="1">
    <citation type="journal article" date="2011" name="J. Bacteriol.">
        <title>Comparative genomics of 28 Salmonella enterica isolates: evidence for CRISPR-mediated adaptive sublineage evolution.</title>
        <authorList>
            <person name="Fricke W.F."/>
            <person name="Mammel M.K."/>
            <person name="McDermott P.F."/>
            <person name="Tartera C."/>
            <person name="White D.G."/>
            <person name="Leclerc J.E."/>
            <person name="Ravel J."/>
            <person name="Cebula T.A."/>
        </authorList>
    </citation>
    <scope>NUCLEOTIDE SEQUENCE [LARGE SCALE GENOMIC DNA]</scope>
    <source>
        <strain>SL254</strain>
    </source>
</reference>
<feature type="chain" id="PRO_1000140195" description="N-acetyl-D-glucosamine kinase">
    <location>
        <begin position="1"/>
        <end position="303"/>
    </location>
</feature>
<feature type="binding site" evidence="1">
    <location>
        <begin position="4"/>
        <end position="11"/>
    </location>
    <ligand>
        <name>ATP</name>
        <dbReference type="ChEBI" id="CHEBI:30616"/>
    </ligand>
</feature>
<feature type="binding site" evidence="1">
    <location>
        <begin position="133"/>
        <end position="140"/>
    </location>
    <ligand>
        <name>ATP</name>
        <dbReference type="ChEBI" id="CHEBI:30616"/>
    </ligand>
</feature>
<feature type="binding site" evidence="1">
    <location>
        <position position="157"/>
    </location>
    <ligand>
        <name>Zn(2+)</name>
        <dbReference type="ChEBI" id="CHEBI:29105"/>
    </ligand>
</feature>
<feature type="binding site" evidence="1">
    <location>
        <position position="177"/>
    </location>
    <ligand>
        <name>Zn(2+)</name>
        <dbReference type="ChEBI" id="CHEBI:29105"/>
    </ligand>
</feature>
<feature type="binding site" evidence="1">
    <location>
        <position position="179"/>
    </location>
    <ligand>
        <name>Zn(2+)</name>
        <dbReference type="ChEBI" id="CHEBI:29105"/>
    </ligand>
</feature>
<feature type="binding site" evidence="1">
    <location>
        <position position="184"/>
    </location>
    <ligand>
        <name>Zn(2+)</name>
        <dbReference type="ChEBI" id="CHEBI:29105"/>
    </ligand>
</feature>
<dbReference type="EC" id="2.7.1.59" evidence="1"/>
<dbReference type="EMBL" id="CP001113">
    <property type="protein sequence ID" value="ACF62384.1"/>
    <property type="molecule type" value="Genomic_DNA"/>
</dbReference>
<dbReference type="RefSeq" id="WP_000291338.1">
    <property type="nucleotide sequence ID" value="NZ_CCMR01000003.1"/>
</dbReference>
<dbReference type="SMR" id="B4T3Q8"/>
<dbReference type="KEGG" id="see:SNSL254_A1320"/>
<dbReference type="HOGENOM" id="CLU_036604_0_3_6"/>
<dbReference type="UniPathway" id="UPA00544"/>
<dbReference type="Proteomes" id="UP000008824">
    <property type="component" value="Chromosome"/>
</dbReference>
<dbReference type="GO" id="GO:0005524">
    <property type="term" value="F:ATP binding"/>
    <property type="evidence" value="ECO:0007669"/>
    <property type="project" value="UniProtKB-UniRule"/>
</dbReference>
<dbReference type="GO" id="GO:0045127">
    <property type="term" value="F:N-acetylglucosamine kinase activity"/>
    <property type="evidence" value="ECO:0007669"/>
    <property type="project" value="UniProtKB-UniRule"/>
</dbReference>
<dbReference type="GO" id="GO:0008270">
    <property type="term" value="F:zinc ion binding"/>
    <property type="evidence" value="ECO:0007669"/>
    <property type="project" value="UniProtKB-UniRule"/>
</dbReference>
<dbReference type="GO" id="GO:0006044">
    <property type="term" value="P:N-acetylglucosamine metabolic process"/>
    <property type="evidence" value="ECO:0007669"/>
    <property type="project" value="UniProtKB-UniRule"/>
</dbReference>
<dbReference type="GO" id="GO:0009254">
    <property type="term" value="P:peptidoglycan turnover"/>
    <property type="evidence" value="ECO:0007669"/>
    <property type="project" value="UniProtKB-UniRule"/>
</dbReference>
<dbReference type="CDD" id="cd24057">
    <property type="entry name" value="ASKHA_NBD_ROK_NAGK"/>
    <property type="match status" value="1"/>
</dbReference>
<dbReference type="FunFam" id="3.30.420.40:FF:000049">
    <property type="entry name" value="N-acetyl-D-glucosamine kinase"/>
    <property type="match status" value="1"/>
</dbReference>
<dbReference type="FunFam" id="3.30.420.40:FF:000051">
    <property type="entry name" value="N-acetyl-D-glucosamine kinase"/>
    <property type="match status" value="1"/>
</dbReference>
<dbReference type="Gene3D" id="3.30.420.40">
    <property type="match status" value="2"/>
</dbReference>
<dbReference type="HAMAP" id="MF_01271">
    <property type="entry name" value="GlcNAc_kinase"/>
    <property type="match status" value="1"/>
</dbReference>
<dbReference type="InterPro" id="IPR043129">
    <property type="entry name" value="ATPase_NBD"/>
</dbReference>
<dbReference type="InterPro" id="IPR023505">
    <property type="entry name" value="N-acetyl-D-glucosamine_kinase"/>
</dbReference>
<dbReference type="InterPro" id="IPR000600">
    <property type="entry name" value="ROK"/>
</dbReference>
<dbReference type="InterPro" id="IPR049874">
    <property type="entry name" value="ROK_cs"/>
</dbReference>
<dbReference type="NCBIfam" id="NF009835">
    <property type="entry name" value="PRK13310.1"/>
    <property type="match status" value="1"/>
</dbReference>
<dbReference type="PANTHER" id="PTHR18964:SF162">
    <property type="entry name" value="N-ACETYL-D-GLUCOSAMINE KINASE"/>
    <property type="match status" value="1"/>
</dbReference>
<dbReference type="PANTHER" id="PTHR18964">
    <property type="entry name" value="ROK (REPRESSOR, ORF, KINASE) FAMILY"/>
    <property type="match status" value="1"/>
</dbReference>
<dbReference type="Pfam" id="PF00480">
    <property type="entry name" value="ROK"/>
    <property type="match status" value="1"/>
</dbReference>
<dbReference type="SUPFAM" id="SSF53067">
    <property type="entry name" value="Actin-like ATPase domain"/>
    <property type="match status" value="1"/>
</dbReference>
<dbReference type="PROSITE" id="PS01125">
    <property type="entry name" value="ROK"/>
    <property type="match status" value="1"/>
</dbReference>
<comment type="function">
    <text evidence="1">Catalyzes the phosphorylation of N-acetyl-D-glucosamine (GlcNAc) derived from cell-wall degradation, yielding GlcNAc-6-P.</text>
</comment>
<comment type="catalytic activity">
    <reaction evidence="1">
        <text>N-acetyl-D-glucosamine + ATP = N-acetyl-D-glucosamine 6-phosphate + ADP + H(+)</text>
        <dbReference type="Rhea" id="RHEA:17417"/>
        <dbReference type="ChEBI" id="CHEBI:15378"/>
        <dbReference type="ChEBI" id="CHEBI:30616"/>
        <dbReference type="ChEBI" id="CHEBI:57513"/>
        <dbReference type="ChEBI" id="CHEBI:456216"/>
        <dbReference type="ChEBI" id="CHEBI:506227"/>
        <dbReference type="EC" id="2.7.1.59"/>
    </reaction>
</comment>
<comment type="pathway">
    <text evidence="1">Cell wall biogenesis; peptidoglycan recycling.</text>
</comment>
<comment type="similarity">
    <text evidence="1">Belongs to the ROK (NagC/XylR) family. NagK subfamily.</text>
</comment>
<proteinExistence type="inferred from homology"/>